<reference key="1">
    <citation type="journal article" date="2005" name="Science">
        <title>The transcriptional landscape of the mammalian genome.</title>
        <authorList>
            <person name="Carninci P."/>
            <person name="Kasukawa T."/>
            <person name="Katayama S."/>
            <person name="Gough J."/>
            <person name="Frith M.C."/>
            <person name="Maeda N."/>
            <person name="Oyama R."/>
            <person name="Ravasi T."/>
            <person name="Lenhard B."/>
            <person name="Wells C."/>
            <person name="Kodzius R."/>
            <person name="Shimokawa K."/>
            <person name="Bajic V.B."/>
            <person name="Brenner S.E."/>
            <person name="Batalov S."/>
            <person name="Forrest A.R."/>
            <person name="Zavolan M."/>
            <person name="Davis M.J."/>
            <person name="Wilming L.G."/>
            <person name="Aidinis V."/>
            <person name="Allen J.E."/>
            <person name="Ambesi-Impiombato A."/>
            <person name="Apweiler R."/>
            <person name="Aturaliya R.N."/>
            <person name="Bailey T.L."/>
            <person name="Bansal M."/>
            <person name="Baxter L."/>
            <person name="Beisel K.W."/>
            <person name="Bersano T."/>
            <person name="Bono H."/>
            <person name="Chalk A.M."/>
            <person name="Chiu K.P."/>
            <person name="Choudhary V."/>
            <person name="Christoffels A."/>
            <person name="Clutterbuck D.R."/>
            <person name="Crowe M.L."/>
            <person name="Dalla E."/>
            <person name="Dalrymple B.P."/>
            <person name="de Bono B."/>
            <person name="Della Gatta G."/>
            <person name="di Bernardo D."/>
            <person name="Down T."/>
            <person name="Engstrom P."/>
            <person name="Fagiolini M."/>
            <person name="Faulkner G."/>
            <person name="Fletcher C.F."/>
            <person name="Fukushima T."/>
            <person name="Furuno M."/>
            <person name="Futaki S."/>
            <person name="Gariboldi M."/>
            <person name="Georgii-Hemming P."/>
            <person name="Gingeras T.R."/>
            <person name="Gojobori T."/>
            <person name="Green R.E."/>
            <person name="Gustincich S."/>
            <person name="Harbers M."/>
            <person name="Hayashi Y."/>
            <person name="Hensch T.K."/>
            <person name="Hirokawa N."/>
            <person name="Hill D."/>
            <person name="Huminiecki L."/>
            <person name="Iacono M."/>
            <person name="Ikeo K."/>
            <person name="Iwama A."/>
            <person name="Ishikawa T."/>
            <person name="Jakt M."/>
            <person name="Kanapin A."/>
            <person name="Katoh M."/>
            <person name="Kawasawa Y."/>
            <person name="Kelso J."/>
            <person name="Kitamura H."/>
            <person name="Kitano H."/>
            <person name="Kollias G."/>
            <person name="Krishnan S.P."/>
            <person name="Kruger A."/>
            <person name="Kummerfeld S.K."/>
            <person name="Kurochkin I.V."/>
            <person name="Lareau L.F."/>
            <person name="Lazarevic D."/>
            <person name="Lipovich L."/>
            <person name="Liu J."/>
            <person name="Liuni S."/>
            <person name="McWilliam S."/>
            <person name="Madan Babu M."/>
            <person name="Madera M."/>
            <person name="Marchionni L."/>
            <person name="Matsuda H."/>
            <person name="Matsuzawa S."/>
            <person name="Miki H."/>
            <person name="Mignone F."/>
            <person name="Miyake S."/>
            <person name="Morris K."/>
            <person name="Mottagui-Tabar S."/>
            <person name="Mulder N."/>
            <person name="Nakano N."/>
            <person name="Nakauchi H."/>
            <person name="Ng P."/>
            <person name="Nilsson R."/>
            <person name="Nishiguchi S."/>
            <person name="Nishikawa S."/>
            <person name="Nori F."/>
            <person name="Ohara O."/>
            <person name="Okazaki Y."/>
            <person name="Orlando V."/>
            <person name="Pang K.C."/>
            <person name="Pavan W.J."/>
            <person name="Pavesi G."/>
            <person name="Pesole G."/>
            <person name="Petrovsky N."/>
            <person name="Piazza S."/>
            <person name="Reed J."/>
            <person name="Reid J.F."/>
            <person name="Ring B.Z."/>
            <person name="Ringwald M."/>
            <person name="Rost B."/>
            <person name="Ruan Y."/>
            <person name="Salzberg S.L."/>
            <person name="Sandelin A."/>
            <person name="Schneider C."/>
            <person name="Schoenbach C."/>
            <person name="Sekiguchi K."/>
            <person name="Semple C.A."/>
            <person name="Seno S."/>
            <person name="Sessa L."/>
            <person name="Sheng Y."/>
            <person name="Shibata Y."/>
            <person name="Shimada H."/>
            <person name="Shimada K."/>
            <person name="Silva D."/>
            <person name="Sinclair B."/>
            <person name="Sperling S."/>
            <person name="Stupka E."/>
            <person name="Sugiura K."/>
            <person name="Sultana R."/>
            <person name="Takenaka Y."/>
            <person name="Taki K."/>
            <person name="Tammoja K."/>
            <person name="Tan S.L."/>
            <person name="Tang S."/>
            <person name="Taylor M.S."/>
            <person name="Tegner J."/>
            <person name="Teichmann S.A."/>
            <person name="Ueda H.R."/>
            <person name="van Nimwegen E."/>
            <person name="Verardo R."/>
            <person name="Wei C.L."/>
            <person name="Yagi K."/>
            <person name="Yamanishi H."/>
            <person name="Zabarovsky E."/>
            <person name="Zhu S."/>
            <person name="Zimmer A."/>
            <person name="Hide W."/>
            <person name="Bult C."/>
            <person name="Grimmond S.M."/>
            <person name="Teasdale R.D."/>
            <person name="Liu E.T."/>
            <person name="Brusic V."/>
            <person name="Quackenbush J."/>
            <person name="Wahlestedt C."/>
            <person name="Mattick J.S."/>
            <person name="Hume D.A."/>
            <person name="Kai C."/>
            <person name="Sasaki D."/>
            <person name="Tomaru Y."/>
            <person name="Fukuda S."/>
            <person name="Kanamori-Katayama M."/>
            <person name="Suzuki M."/>
            <person name="Aoki J."/>
            <person name="Arakawa T."/>
            <person name="Iida J."/>
            <person name="Imamura K."/>
            <person name="Itoh M."/>
            <person name="Kato T."/>
            <person name="Kawaji H."/>
            <person name="Kawagashira N."/>
            <person name="Kawashima T."/>
            <person name="Kojima M."/>
            <person name="Kondo S."/>
            <person name="Konno H."/>
            <person name="Nakano K."/>
            <person name="Ninomiya N."/>
            <person name="Nishio T."/>
            <person name="Okada M."/>
            <person name="Plessy C."/>
            <person name="Shibata K."/>
            <person name="Shiraki T."/>
            <person name="Suzuki S."/>
            <person name="Tagami M."/>
            <person name="Waki K."/>
            <person name="Watahiki A."/>
            <person name="Okamura-Oho Y."/>
            <person name="Suzuki H."/>
            <person name="Kawai J."/>
            <person name="Hayashizaki Y."/>
        </authorList>
    </citation>
    <scope>NUCLEOTIDE SEQUENCE [LARGE SCALE MRNA]</scope>
    <source>
        <strain>NOD</strain>
        <tissue>Dendritic cell</tissue>
        <tissue>Olfactory bulb</tissue>
        <tissue>Spleen</tissue>
    </source>
</reference>
<reference key="2">
    <citation type="journal article" date="2004" name="Genome Res.">
        <title>The status, quality, and expansion of the NIH full-length cDNA project: the Mammalian Gene Collection (MGC).</title>
        <authorList>
            <consortium name="The MGC Project Team"/>
        </authorList>
    </citation>
    <scope>NUCLEOTIDE SEQUENCE [LARGE SCALE MRNA]</scope>
    <source>
        <tissue>Bone</tissue>
    </source>
</reference>
<accession>Q3TDE8</accession>
<accession>Q3TAT2</accession>
<accession>Q8BIB1</accession>
<protein>
    <recommendedName>
        <fullName>Zinc finger protein 691</fullName>
    </recommendedName>
</protein>
<gene>
    <name type="primary">Znf691</name>
    <name type="synonym">Zfp691</name>
</gene>
<sequence length="283" mass="32199">MGSEKEQRPEAHLPEEGEGAKPWRVDGSKDSQITPREDHGQESLLAGLHGTHPPKTRQKVTAQAGGPGDPMLFSSPETDEKLFICAQCGKTFNNTSNLRTHQRIHTGEKPYKCSECGKSFSRSSNRIRHERIHLEEKHYQCAKCQESFRRRSDLTTHQQDHLGQRPYRCDICGKSFTQSSTLAVHHRTHLEPAPYICCECGKSFSNSSSFGVHHRTHTGERPYECTECGRTFSDISNFGAHQRTHRGEKPYRCTLCGKHFSRSSNLIRHQKTHLGEQDEKDFS</sequence>
<proteinExistence type="evidence at transcript level"/>
<dbReference type="EMBL" id="AK032431">
    <property type="protein sequence ID" value="BAC27867.1"/>
    <property type="molecule type" value="mRNA"/>
</dbReference>
<dbReference type="EMBL" id="AK170239">
    <property type="protein sequence ID" value="BAE41654.1"/>
    <property type="molecule type" value="mRNA"/>
</dbReference>
<dbReference type="EMBL" id="AK171649">
    <property type="protein sequence ID" value="BAE42586.1"/>
    <property type="molecule type" value="mRNA"/>
</dbReference>
<dbReference type="EMBL" id="BC108395">
    <property type="protein sequence ID" value="AAI08396.1"/>
    <property type="molecule type" value="mRNA"/>
</dbReference>
<dbReference type="CCDS" id="CCDS18570.1"/>
<dbReference type="RefSeq" id="NP_001139407.1">
    <property type="nucleotide sequence ID" value="NM_001145935.1"/>
</dbReference>
<dbReference type="RefSeq" id="NP_001139408.1">
    <property type="nucleotide sequence ID" value="NM_001145936.1"/>
</dbReference>
<dbReference type="RefSeq" id="NP_898963.2">
    <property type="nucleotide sequence ID" value="NM_183140.3"/>
</dbReference>
<dbReference type="SMR" id="Q3TDE8"/>
<dbReference type="STRING" id="10090.ENSMUSP00000053013"/>
<dbReference type="iPTMnet" id="Q3TDE8"/>
<dbReference type="PhosphoSitePlus" id="Q3TDE8"/>
<dbReference type="PaxDb" id="10090-ENSMUSP00000053013"/>
<dbReference type="ProteomicsDB" id="302093"/>
<dbReference type="DNASU" id="195522"/>
<dbReference type="GeneID" id="195522"/>
<dbReference type="KEGG" id="mmu:195522"/>
<dbReference type="AGR" id="MGI:3041163"/>
<dbReference type="CTD" id="195522"/>
<dbReference type="MGI" id="MGI:3041163">
    <property type="gene designation" value="Zfp691"/>
</dbReference>
<dbReference type="eggNOG" id="KOG1721">
    <property type="taxonomic scope" value="Eukaryota"/>
</dbReference>
<dbReference type="InParanoid" id="Q3TDE8"/>
<dbReference type="OrthoDB" id="40579at2759"/>
<dbReference type="PhylomeDB" id="Q3TDE8"/>
<dbReference type="BioGRID-ORCS" id="195522">
    <property type="hits" value="2 hits in 78 CRISPR screens"/>
</dbReference>
<dbReference type="ChiTaRS" id="Zfp691">
    <property type="organism name" value="mouse"/>
</dbReference>
<dbReference type="PRO" id="PR:Q3TDE8"/>
<dbReference type="Proteomes" id="UP000000589">
    <property type="component" value="Unplaced"/>
</dbReference>
<dbReference type="RNAct" id="Q3TDE8">
    <property type="molecule type" value="protein"/>
</dbReference>
<dbReference type="GO" id="GO:0005634">
    <property type="term" value="C:nucleus"/>
    <property type="evidence" value="ECO:0007669"/>
    <property type="project" value="UniProtKB-SubCell"/>
</dbReference>
<dbReference type="GO" id="GO:0003677">
    <property type="term" value="F:DNA binding"/>
    <property type="evidence" value="ECO:0007669"/>
    <property type="project" value="UniProtKB-KW"/>
</dbReference>
<dbReference type="GO" id="GO:0008270">
    <property type="term" value="F:zinc ion binding"/>
    <property type="evidence" value="ECO:0007669"/>
    <property type="project" value="UniProtKB-KW"/>
</dbReference>
<dbReference type="FunFam" id="3.30.160.60:FF:000088">
    <property type="entry name" value="Zinc finger and SCAN domain containing 2"/>
    <property type="match status" value="1"/>
</dbReference>
<dbReference type="FunFam" id="3.30.160.60:FF:000839">
    <property type="entry name" value="Zinc finger protein 691"/>
    <property type="match status" value="1"/>
</dbReference>
<dbReference type="FunFam" id="3.30.160.60:FF:000885">
    <property type="entry name" value="Zinc finger protein 691"/>
    <property type="match status" value="1"/>
</dbReference>
<dbReference type="FunFam" id="3.30.160.60:FF:000938">
    <property type="entry name" value="Zinc finger protein 691"/>
    <property type="match status" value="1"/>
</dbReference>
<dbReference type="FunFam" id="3.30.160.60:FF:000953">
    <property type="entry name" value="Zinc finger protein 691"/>
    <property type="match status" value="1"/>
</dbReference>
<dbReference type="FunFam" id="3.30.160.60:FF:001167">
    <property type="entry name" value="zinc finger protein 691"/>
    <property type="match status" value="1"/>
</dbReference>
<dbReference type="FunFam" id="3.30.160.60:FF:000290">
    <property type="entry name" value="Zinc finger protein 697 isoform X1"/>
    <property type="match status" value="1"/>
</dbReference>
<dbReference type="Gene3D" id="3.30.160.60">
    <property type="entry name" value="Classic Zinc Finger"/>
    <property type="match status" value="7"/>
</dbReference>
<dbReference type="InterPro" id="IPR050331">
    <property type="entry name" value="Zinc_finger"/>
</dbReference>
<dbReference type="InterPro" id="IPR036236">
    <property type="entry name" value="Znf_C2H2_sf"/>
</dbReference>
<dbReference type="InterPro" id="IPR013087">
    <property type="entry name" value="Znf_C2H2_type"/>
</dbReference>
<dbReference type="PANTHER" id="PTHR16515">
    <property type="entry name" value="PR DOMAIN ZINC FINGER PROTEIN"/>
    <property type="match status" value="1"/>
</dbReference>
<dbReference type="PANTHER" id="PTHR16515:SF58">
    <property type="entry name" value="ZINC FINGER PROTEIN 22"/>
    <property type="match status" value="1"/>
</dbReference>
<dbReference type="Pfam" id="PF00096">
    <property type="entry name" value="zf-C2H2"/>
    <property type="match status" value="5"/>
</dbReference>
<dbReference type="Pfam" id="PF13465">
    <property type="entry name" value="zf-H2C2_2"/>
    <property type="match status" value="1"/>
</dbReference>
<dbReference type="SMART" id="SM00355">
    <property type="entry name" value="ZnF_C2H2"/>
    <property type="match status" value="7"/>
</dbReference>
<dbReference type="SUPFAM" id="SSF57667">
    <property type="entry name" value="beta-beta-alpha zinc fingers"/>
    <property type="match status" value="4"/>
</dbReference>
<dbReference type="PROSITE" id="PS00028">
    <property type="entry name" value="ZINC_FINGER_C2H2_1"/>
    <property type="match status" value="7"/>
</dbReference>
<dbReference type="PROSITE" id="PS50157">
    <property type="entry name" value="ZINC_FINGER_C2H2_2"/>
    <property type="match status" value="7"/>
</dbReference>
<comment type="function">
    <text>May be involved in transcriptional regulation.</text>
</comment>
<comment type="subcellular location">
    <subcellularLocation>
        <location evidence="4">Nucleus</location>
    </subcellularLocation>
</comment>
<comment type="similarity">
    <text evidence="4">Belongs to the krueppel C2H2-type zinc-finger protein family.</text>
</comment>
<organism>
    <name type="scientific">Mus musculus</name>
    <name type="common">Mouse</name>
    <dbReference type="NCBI Taxonomy" id="10090"/>
    <lineage>
        <taxon>Eukaryota</taxon>
        <taxon>Metazoa</taxon>
        <taxon>Chordata</taxon>
        <taxon>Craniata</taxon>
        <taxon>Vertebrata</taxon>
        <taxon>Euteleostomi</taxon>
        <taxon>Mammalia</taxon>
        <taxon>Eutheria</taxon>
        <taxon>Euarchontoglires</taxon>
        <taxon>Glires</taxon>
        <taxon>Rodentia</taxon>
        <taxon>Myomorpha</taxon>
        <taxon>Muroidea</taxon>
        <taxon>Muridae</taxon>
        <taxon>Murinae</taxon>
        <taxon>Mus</taxon>
        <taxon>Mus</taxon>
    </lineage>
</organism>
<keyword id="KW-0238">DNA-binding</keyword>
<keyword id="KW-1017">Isopeptide bond</keyword>
<keyword id="KW-0479">Metal-binding</keyword>
<keyword id="KW-0539">Nucleus</keyword>
<keyword id="KW-0597">Phosphoprotein</keyword>
<keyword id="KW-1185">Reference proteome</keyword>
<keyword id="KW-0677">Repeat</keyword>
<keyword id="KW-0804">Transcription</keyword>
<keyword id="KW-0805">Transcription regulation</keyword>
<keyword id="KW-0832">Ubl conjugation</keyword>
<keyword id="KW-0862">Zinc</keyword>
<keyword id="KW-0863">Zinc-finger</keyword>
<evidence type="ECO:0000250" key="1">
    <source>
        <dbReference type="UniProtKB" id="Q5VV52"/>
    </source>
</evidence>
<evidence type="ECO:0000255" key="2">
    <source>
        <dbReference type="PROSITE-ProRule" id="PRU00042"/>
    </source>
</evidence>
<evidence type="ECO:0000256" key="3">
    <source>
        <dbReference type="SAM" id="MobiDB-lite"/>
    </source>
</evidence>
<evidence type="ECO:0000305" key="4"/>
<feature type="chain" id="PRO_0000234013" description="Zinc finger protein 691">
    <location>
        <begin position="1"/>
        <end position="283"/>
    </location>
</feature>
<feature type="zinc finger region" description="C2H2-type 1" evidence="2">
    <location>
        <begin position="83"/>
        <end position="105"/>
    </location>
</feature>
<feature type="zinc finger region" description="C2H2-type 2" evidence="2">
    <location>
        <begin position="111"/>
        <end position="133"/>
    </location>
</feature>
<feature type="zinc finger region" description="C2H2-type 3" evidence="2">
    <location>
        <begin position="139"/>
        <end position="161"/>
    </location>
</feature>
<feature type="zinc finger region" description="C2H2-type 4" evidence="2">
    <location>
        <begin position="167"/>
        <end position="189"/>
    </location>
</feature>
<feature type="zinc finger region" description="C2H2-type 5" evidence="2">
    <location>
        <begin position="195"/>
        <end position="217"/>
    </location>
</feature>
<feature type="zinc finger region" description="C2H2-type 6" evidence="2">
    <location>
        <begin position="223"/>
        <end position="245"/>
    </location>
</feature>
<feature type="zinc finger region" description="C2H2-type 7" evidence="2">
    <location>
        <begin position="251"/>
        <end position="273"/>
    </location>
</feature>
<feature type="region of interest" description="Disordered" evidence="3">
    <location>
        <begin position="1"/>
        <end position="68"/>
    </location>
</feature>
<feature type="compositionally biased region" description="Basic and acidic residues" evidence="3">
    <location>
        <begin position="1"/>
        <end position="41"/>
    </location>
</feature>
<feature type="modified residue" description="Phosphoserine" evidence="1">
    <location>
        <position position="43"/>
    </location>
</feature>
<feature type="cross-link" description="Glycyl lysine isopeptide (Lys-Gly) (interchain with G-Cter in SUMO2)" evidence="1">
    <location>
        <position position="81"/>
    </location>
</feature>
<feature type="sequence conflict" description="In Ref. 1; BAC27867." evidence="4" ref="1">
    <original>D</original>
    <variation>G</variation>
    <location>
        <position position="38"/>
    </location>
</feature>
<feature type="sequence conflict" description="In Ref. 1; BAC27867." evidence="4" ref="1">
    <original>G</original>
    <variation>R</variation>
    <location>
        <position position="68"/>
    </location>
</feature>
<feature type="sequence conflict" description="In Ref. 1; BAE42586." evidence="4" ref="1">
    <original>V</original>
    <variation>E</variation>
    <location>
        <position position="184"/>
    </location>
</feature>
<feature type="sequence conflict" description="In Ref. 1; BAE42586." evidence="4" ref="1">
    <original>Q</original>
    <variation>L</variation>
    <location>
        <position position="277"/>
    </location>
</feature>
<name>ZN691_MOUSE</name>